<accession>Q88VB0</accession>
<accession>F9UQ96</accession>
<keyword id="KW-0240">DNA-directed RNA polymerase</keyword>
<keyword id="KW-0548">Nucleotidyltransferase</keyword>
<keyword id="KW-1185">Reference proteome</keyword>
<keyword id="KW-0804">Transcription</keyword>
<keyword id="KW-0808">Transferase</keyword>
<dbReference type="EC" id="2.7.7.6" evidence="1"/>
<dbReference type="EMBL" id="AL935263">
    <property type="protein sequence ID" value="CCC79385.1"/>
    <property type="molecule type" value="Genomic_DNA"/>
</dbReference>
<dbReference type="RefSeq" id="WP_003640827.1">
    <property type="nucleotide sequence ID" value="NC_004567.2"/>
</dbReference>
<dbReference type="RefSeq" id="YP_004889899.1">
    <property type="nucleotide sequence ID" value="NC_004567.2"/>
</dbReference>
<dbReference type="SMR" id="Q88VB0"/>
<dbReference type="STRING" id="220668.lp_2157"/>
<dbReference type="EnsemblBacteria" id="CCC79385">
    <property type="protein sequence ID" value="CCC79385"/>
    <property type="gene ID" value="lp_2157"/>
</dbReference>
<dbReference type="KEGG" id="lpl:lp_2157"/>
<dbReference type="PATRIC" id="fig|220668.9.peg.1826"/>
<dbReference type="eggNOG" id="COG5503">
    <property type="taxonomic scope" value="Bacteria"/>
</dbReference>
<dbReference type="HOGENOM" id="CLU_187518_0_0_9"/>
<dbReference type="OrthoDB" id="2147503at2"/>
<dbReference type="PhylomeDB" id="Q88VB0"/>
<dbReference type="Proteomes" id="UP000000432">
    <property type="component" value="Chromosome"/>
</dbReference>
<dbReference type="GO" id="GO:0000428">
    <property type="term" value="C:DNA-directed RNA polymerase complex"/>
    <property type="evidence" value="ECO:0007669"/>
    <property type="project" value="UniProtKB-KW"/>
</dbReference>
<dbReference type="GO" id="GO:0003677">
    <property type="term" value="F:DNA binding"/>
    <property type="evidence" value="ECO:0007669"/>
    <property type="project" value="UniProtKB-UniRule"/>
</dbReference>
<dbReference type="GO" id="GO:0003899">
    <property type="term" value="F:DNA-directed RNA polymerase activity"/>
    <property type="evidence" value="ECO:0007669"/>
    <property type="project" value="UniProtKB-UniRule"/>
</dbReference>
<dbReference type="GO" id="GO:0006351">
    <property type="term" value="P:DNA-templated transcription"/>
    <property type="evidence" value="ECO:0007669"/>
    <property type="project" value="UniProtKB-UniRule"/>
</dbReference>
<dbReference type="Gene3D" id="3.10.20.730">
    <property type="entry name" value="RNAP, epsilon subunit-like"/>
    <property type="match status" value="1"/>
</dbReference>
<dbReference type="HAMAP" id="MF_01553">
    <property type="entry name" value="RNApol_bact_RpoY"/>
    <property type="match status" value="1"/>
</dbReference>
<dbReference type="InterPro" id="IPR009907">
    <property type="entry name" value="RpoY"/>
</dbReference>
<dbReference type="NCBIfam" id="NF010188">
    <property type="entry name" value="PRK13667.1"/>
    <property type="match status" value="1"/>
</dbReference>
<dbReference type="Pfam" id="PF07288">
    <property type="entry name" value="RpoY"/>
    <property type="match status" value="1"/>
</dbReference>
<reference key="1">
    <citation type="journal article" date="2003" name="Proc. Natl. Acad. Sci. U.S.A.">
        <title>Complete genome sequence of Lactobacillus plantarum WCFS1.</title>
        <authorList>
            <person name="Kleerebezem M."/>
            <person name="Boekhorst J."/>
            <person name="van Kranenburg R."/>
            <person name="Molenaar D."/>
            <person name="Kuipers O.P."/>
            <person name="Leer R."/>
            <person name="Tarchini R."/>
            <person name="Peters S.A."/>
            <person name="Sandbrink H.M."/>
            <person name="Fiers M.W.E.J."/>
            <person name="Stiekema W."/>
            <person name="Klein Lankhorst R.M."/>
            <person name="Bron P.A."/>
            <person name="Hoffer S.M."/>
            <person name="Nierop Groot M.N."/>
            <person name="Kerkhoven R."/>
            <person name="De Vries M."/>
            <person name="Ursing B."/>
            <person name="De Vos W.M."/>
            <person name="Siezen R.J."/>
        </authorList>
    </citation>
    <scope>NUCLEOTIDE SEQUENCE [LARGE SCALE GENOMIC DNA]</scope>
    <source>
        <strain>ATCC BAA-793 / NCIMB 8826 / WCFS1</strain>
    </source>
</reference>
<reference key="2">
    <citation type="journal article" date="2012" name="J. Bacteriol.">
        <title>Complete resequencing and reannotation of the Lactobacillus plantarum WCFS1 genome.</title>
        <authorList>
            <person name="Siezen R.J."/>
            <person name="Francke C."/>
            <person name="Renckens B."/>
            <person name="Boekhorst J."/>
            <person name="Wels M."/>
            <person name="Kleerebezem M."/>
            <person name="van Hijum S.A."/>
        </authorList>
    </citation>
    <scope>NUCLEOTIDE SEQUENCE [LARGE SCALE GENOMIC DNA]</scope>
    <scope>GENOME REANNOTATION</scope>
    <source>
        <strain>ATCC BAA-793 / NCIMB 8826 / WCFS1</strain>
    </source>
</reference>
<proteinExistence type="inferred from homology"/>
<comment type="function">
    <text evidence="1">A non-essential component of RNA polymerase (RNAP).</text>
</comment>
<comment type="catalytic activity">
    <reaction evidence="1">
        <text>RNA(n) + a ribonucleoside 5'-triphosphate = RNA(n+1) + diphosphate</text>
        <dbReference type="Rhea" id="RHEA:21248"/>
        <dbReference type="Rhea" id="RHEA-COMP:14527"/>
        <dbReference type="Rhea" id="RHEA-COMP:17342"/>
        <dbReference type="ChEBI" id="CHEBI:33019"/>
        <dbReference type="ChEBI" id="CHEBI:61557"/>
        <dbReference type="ChEBI" id="CHEBI:140395"/>
        <dbReference type="EC" id="2.7.7.6"/>
    </reaction>
</comment>
<comment type="subunit">
    <text evidence="1">RNAP is composed of a core of 2 alpha, a beta and a beta' subunit. The core is associated with a delta subunit, and at least one of epsilon or omega. When a sigma factor is associated with the core the holoenzyme is formed, which can initiate transcription.</text>
</comment>
<comment type="similarity">
    <text evidence="1">Belongs to the RNA polymerase subunit epsilon family.</text>
</comment>
<gene>
    <name evidence="1" type="primary">rpoY</name>
    <name type="ordered locus">lp_2157</name>
</gene>
<evidence type="ECO:0000255" key="1">
    <source>
        <dbReference type="HAMAP-Rule" id="MF_01553"/>
    </source>
</evidence>
<name>RPOY_LACPL</name>
<organism>
    <name type="scientific">Lactiplantibacillus plantarum (strain ATCC BAA-793 / NCIMB 8826 / WCFS1)</name>
    <name type="common">Lactobacillus plantarum</name>
    <dbReference type="NCBI Taxonomy" id="220668"/>
    <lineage>
        <taxon>Bacteria</taxon>
        <taxon>Bacillati</taxon>
        <taxon>Bacillota</taxon>
        <taxon>Bacilli</taxon>
        <taxon>Lactobacillales</taxon>
        <taxon>Lactobacillaceae</taxon>
        <taxon>Lactiplantibacillus</taxon>
    </lineage>
</organism>
<feature type="chain" id="PRO_0000163127" description="DNA-directed RNA polymerase subunit epsilon">
    <location>
        <begin position="1"/>
        <end position="72"/>
    </location>
</feature>
<protein>
    <recommendedName>
        <fullName evidence="1">DNA-directed RNA polymerase subunit epsilon</fullName>
        <shortName evidence="1">RNAP epsilon subunit</shortName>
        <ecNumber evidence="1">2.7.7.6</ecNumber>
    </recommendedName>
    <alternativeName>
        <fullName evidence="1">RNA polymerase epsilon subunit</fullName>
    </alternativeName>
    <alternativeName>
        <fullName evidence="1">Transcriptase subunit epsilon</fullName>
    </alternativeName>
</protein>
<sequence>MIYKVYYQETKERNPQRETTQSLYLEAETEVAARTLVEDNTDHNIEFIEPLEGNFLDYEQKNPEYHLTEFNK</sequence>